<sequence>MGGLSIWHWLIVLLIVALVFGTKKLRNIGNDLGSAVKGFKDGMREGEAPADPQQLPRSGSVNVDAKDATRSSDSNKA</sequence>
<keyword id="KW-0997">Cell inner membrane</keyword>
<keyword id="KW-1003">Cell membrane</keyword>
<keyword id="KW-0472">Membrane</keyword>
<keyword id="KW-0653">Protein transport</keyword>
<keyword id="KW-0811">Translocation</keyword>
<keyword id="KW-0812">Transmembrane</keyword>
<keyword id="KW-1133">Transmembrane helix</keyword>
<keyword id="KW-0813">Transport</keyword>
<evidence type="ECO:0000255" key="1">
    <source>
        <dbReference type="HAMAP-Rule" id="MF_00236"/>
    </source>
</evidence>
<evidence type="ECO:0000256" key="2">
    <source>
        <dbReference type="SAM" id="MobiDB-lite"/>
    </source>
</evidence>
<comment type="function">
    <text evidence="1">Part of the twin-arginine translocation (Tat) system that transports large folded proteins containing a characteristic twin-arginine motif in their signal peptide across membranes. TatA could form the protein-conducting channel of the Tat system.</text>
</comment>
<comment type="subunit">
    <text evidence="1">The Tat system comprises two distinct complexes: a TatABC complex, containing multiple copies of TatA, TatB and TatC subunits, and a separate TatA complex, containing only TatA subunits. Substrates initially bind to the TatABC complex, which probably triggers association of the separate TatA complex to form the active translocon.</text>
</comment>
<comment type="subcellular location">
    <subcellularLocation>
        <location evidence="1">Cell inner membrane</location>
        <topology evidence="1">Single-pass membrane protein</topology>
    </subcellularLocation>
</comment>
<comment type="similarity">
    <text evidence="1">Belongs to the TatA/E family.</text>
</comment>
<gene>
    <name evidence="1" type="primary">tatA</name>
    <name type="ordered locus">BTH_I2982</name>
</gene>
<accession>Q2SUB3</accession>
<dbReference type="EMBL" id="CP000086">
    <property type="protein sequence ID" value="ABC37821.1"/>
    <property type="molecule type" value="Genomic_DNA"/>
</dbReference>
<dbReference type="RefSeq" id="WP_009888545.1">
    <property type="nucleotide sequence ID" value="NZ_CP008786.1"/>
</dbReference>
<dbReference type="SMR" id="Q2SUB3"/>
<dbReference type="GeneID" id="45122670"/>
<dbReference type="KEGG" id="bte:BTH_I2982"/>
<dbReference type="HOGENOM" id="CLU_086034_5_3_4"/>
<dbReference type="Proteomes" id="UP000001930">
    <property type="component" value="Chromosome I"/>
</dbReference>
<dbReference type="GO" id="GO:0033281">
    <property type="term" value="C:TAT protein transport complex"/>
    <property type="evidence" value="ECO:0007669"/>
    <property type="project" value="UniProtKB-UniRule"/>
</dbReference>
<dbReference type="GO" id="GO:0008320">
    <property type="term" value="F:protein transmembrane transporter activity"/>
    <property type="evidence" value="ECO:0007669"/>
    <property type="project" value="UniProtKB-UniRule"/>
</dbReference>
<dbReference type="GO" id="GO:0043953">
    <property type="term" value="P:protein transport by the Tat complex"/>
    <property type="evidence" value="ECO:0007669"/>
    <property type="project" value="UniProtKB-UniRule"/>
</dbReference>
<dbReference type="Gene3D" id="1.20.5.3310">
    <property type="match status" value="1"/>
</dbReference>
<dbReference type="HAMAP" id="MF_00236">
    <property type="entry name" value="TatA_E"/>
    <property type="match status" value="1"/>
</dbReference>
<dbReference type="InterPro" id="IPR003369">
    <property type="entry name" value="TatA/B/E"/>
</dbReference>
<dbReference type="InterPro" id="IPR006312">
    <property type="entry name" value="TatA/E"/>
</dbReference>
<dbReference type="NCBIfam" id="NF002813">
    <property type="entry name" value="PRK02958.1"/>
    <property type="match status" value="1"/>
</dbReference>
<dbReference type="NCBIfam" id="TIGR01411">
    <property type="entry name" value="tatAE"/>
    <property type="match status" value="1"/>
</dbReference>
<dbReference type="PANTHER" id="PTHR42982">
    <property type="entry name" value="SEC-INDEPENDENT PROTEIN TRANSLOCASE PROTEIN TATA"/>
    <property type="match status" value="1"/>
</dbReference>
<dbReference type="PANTHER" id="PTHR42982:SF1">
    <property type="entry name" value="SEC-INDEPENDENT PROTEIN TRANSLOCASE PROTEIN TATA"/>
    <property type="match status" value="1"/>
</dbReference>
<dbReference type="Pfam" id="PF02416">
    <property type="entry name" value="TatA_B_E"/>
    <property type="match status" value="1"/>
</dbReference>
<feature type="chain" id="PRO_1000044373" description="Sec-independent protein translocase protein TatA">
    <location>
        <begin position="1"/>
        <end position="77"/>
    </location>
</feature>
<feature type="transmembrane region" description="Helical" evidence="1">
    <location>
        <begin position="1"/>
        <end position="21"/>
    </location>
</feature>
<feature type="region of interest" description="Disordered" evidence="2">
    <location>
        <begin position="40"/>
        <end position="77"/>
    </location>
</feature>
<feature type="compositionally biased region" description="Basic and acidic residues" evidence="2">
    <location>
        <begin position="64"/>
        <end position="77"/>
    </location>
</feature>
<name>TATA_BURTA</name>
<reference key="1">
    <citation type="journal article" date="2005" name="BMC Genomics">
        <title>Bacterial genome adaptation to niches: divergence of the potential virulence genes in three Burkholderia species of different survival strategies.</title>
        <authorList>
            <person name="Kim H.S."/>
            <person name="Schell M.A."/>
            <person name="Yu Y."/>
            <person name="Ulrich R.L."/>
            <person name="Sarria S.H."/>
            <person name="Nierman W.C."/>
            <person name="DeShazer D."/>
        </authorList>
    </citation>
    <scope>NUCLEOTIDE SEQUENCE [LARGE SCALE GENOMIC DNA]</scope>
    <source>
        <strain>ATCC 700388 / DSM 13276 / CCUG 48851 / CIP 106301 / E264</strain>
    </source>
</reference>
<organism>
    <name type="scientific">Burkholderia thailandensis (strain ATCC 700388 / DSM 13276 / CCUG 48851 / CIP 106301 / E264)</name>
    <dbReference type="NCBI Taxonomy" id="271848"/>
    <lineage>
        <taxon>Bacteria</taxon>
        <taxon>Pseudomonadati</taxon>
        <taxon>Pseudomonadota</taxon>
        <taxon>Betaproteobacteria</taxon>
        <taxon>Burkholderiales</taxon>
        <taxon>Burkholderiaceae</taxon>
        <taxon>Burkholderia</taxon>
        <taxon>pseudomallei group</taxon>
    </lineage>
</organism>
<proteinExistence type="inferred from homology"/>
<protein>
    <recommendedName>
        <fullName evidence="1">Sec-independent protein translocase protein TatA</fullName>
    </recommendedName>
</protein>